<sequence>MKTEARDGGSEWRWVAIFELFLRLAAIVSTSVAVYAAMGKIFVVAVNGVACFYLLMSLPVSIFNIMRPHAYPANRVFLNIMDMVMVALVTAGALAAGIVYLVEKAGNARASWVSVWSQFDSSSCFAVLALILHVLLSGVILYKQALNIKFKKLDSVD</sequence>
<accession>A9NQL1</accession>
<name>CSPL1_PICSI</name>
<organism>
    <name type="scientific">Picea sitchensis</name>
    <name type="common">Sitka spruce</name>
    <name type="synonym">Pinus sitchensis</name>
    <dbReference type="NCBI Taxonomy" id="3332"/>
    <lineage>
        <taxon>Eukaryota</taxon>
        <taxon>Viridiplantae</taxon>
        <taxon>Streptophyta</taxon>
        <taxon>Embryophyta</taxon>
        <taxon>Tracheophyta</taxon>
        <taxon>Spermatophyta</taxon>
        <taxon>Pinopsida</taxon>
        <taxon>Pinidae</taxon>
        <taxon>Conifers I</taxon>
        <taxon>Pinales</taxon>
        <taxon>Pinaceae</taxon>
        <taxon>Picea</taxon>
    </lineage>
</organism>
<evidence type="ECO:0000250" key="1"/>
<evidence type="ECO:0000255" key="2"/>
<evidence type="ECO:0000305" key="3"/>
<dbReference type="EMBL" id="EF083581">
    <property type="protein sequence ID" value="ABK22922.1"/>
    <property type="molecule type" value="mRNA"/>
</dbReference>
<dbReference type="EMBL" id="EF086793">
    <property type="protein sequence ID" value="ABK26049.1"/>
    <property type="molecule type" value="mRNA"/>
</dbReference>
<dbReference type="GO" id="GO:0005886">
    <property type="term" value="C:plasma membrane"/>
    <property type="evidence" value="ECO:0007669"/>
    <property type="project" value="UniProtKB-SubCell"/>
</dbReference>
<dbReference type="InterPro" id="IPR006459">
    <property type="entry name" value="CASP/CASPL"/>
</dbReference>
<dbReference type="InterPro" id="IPR006702">
    <property type="entry name" value="CASP_dom"/>
</dbReference>
<dbReference type="NCBIfam" id="TIGR01569">
    <property type="entry name" value="A_tha_TIGR01569"/>
    <property type="match status" value="1"/>
</dbReference>
<dbReference type="Pfam" id="PF04535">
    <property type="entry name" value="CASP_dom"/>
    <property type="match status" value="1"/>
</dbReference>
<keyword id="KW-1003">Cell membrane</keyword>
<keyword id="KW-0472">Membrane</keyword>
<keyword id="KW-0812">Transmembrane</keyword>
<keyword id="KW-1133">Transmembrane helix</keyword>
<protein>
    <recommendedName>
        <fullName>CASP-like protein 1</fullName>
    </recommendedName>
</protein>
<comment type="subunit">
    <text evidence="1">Homodimer and heterodimers.</text>
</comment>
<comment type="subcellular location">
    <subcellularLocation>
        <location evidence="1">Cell membrane</location>
        <topology evidence="1">Multi-pass membrane protein</topology>
    </subcellularLocation>
</comment>
<comment type="similarity">
    <text evidence="3">Belongs to the Casparian strip membrane proteins (CASP) family.</text>
</comment>
<proteinExistence type="evidence at transcript level"/>
<feature type="chain" id="PRO_0000412029" description="CASP-like protein 1">
    <location>
        <begin position="1"/>
        <end position="157"/>
    </location>
</feature>
<feature type="topological domain" description="Cytoplasmic" evidence="2">
    <location>
        <begin position="1"/>
        <end position="13"/>
    </location>
</feature>
<feature type="transmembrane region" description="Helical" evidence="2">
    <location>
        <begin position="14"/>
        <end position="34"/>
    </location>
</feature>
<feature type="topological domain" description="Extracellular" evidence="2">
    <location>
        <begin position="35"/>
        <end position="40"/>
    </location>
</feature>
<feature type="transmembrane region" description="Helical" evidence="2">
    <location>
        <begin position="41"/>
        <end position="61"/>
    </location>
</feature>
<feature type="topological domain" description="Cytoplasmic" evidence="2">
    <location>
        <begin position="62"/>
        <end position="82"/>
    </location>
</feature>
<feature type="transmembrane region" description="Helical" evidence="2">
    <location>
        <begin position="83"/>
        <end position="103"/>
    </location>
</feature>
<feature type="topological domain" description="Extracellular" evidence="2">
    <location>
        <begin position="104"/>
        <end position="121"/>
    </location>
</feature>
<feature type="transmembrane region" description="Helical" evidence="2">
    <location>
        <begin position="122"/>
        <end position="142"/>
    </location>
</feature>
<feature type="topological domain" description="Cytoplasmic" evidence="2">
    <location>
        <begin position="143"/>
        <end position="157"/>
    </location>
</feature>
<reference key="1">
    <citation type="journal article" date="2008" name="BMC Genomics">
        <title>A conifer genomics resource of 200,000 spruce (Picea spp.) ESTs and 6,464 high-quality, sequence-finished full-length cDNAs for Sitka spruce (Picea sitchensis).</title>
        <authorList>
            <person name="Ralph S.G."/>
            <person name="Chun H.J.E."/>
            <person name="Kolosova N."/>
            <person name="Cooper D."/>
            <person name="Oddy C."/>
            <person name="Ritland C.E."/>
            <person name="Kirkpatrick R."/>
            <person name="Moore R."/>
            <person name="Barber S."/>
            <person name="Holt R.A."/>
            <person name="Jones S.J.M."/>
            <person name="Marra M.A."/>
            <person name="Douglas C.J."/>
            <person name="Ritland K."/>
            <person name="Bohlmann J."/>
        </authorList>
    </citation>
    <scope>NUCLEOTIDE SEQUENCE [LARGE SCALE MRNA]</scope>
    <source>
        <strain>cv. FB3-425</strain>
        <tissue>Bark</tissue>
    </source>
</reference>